<keyword id="KW-0002">3D-structure</keyword>
<keyword id="KW-0597">Phosphoprotein</keyword>
<keyword id="KW-1185">Reference proteome</keyword>
<keyword id="KW-0677">Repeat</keyword>
<keyword id="KW-0804">Transcription</keyword>
<keyword id="KW-0805">Transcription regulation</keyword>
<reference key="1">
    <citation type="journal article" date="1991" name="Yeast">
        <title>The YGL023 gene encodes a putative regulatory protein.</title>
        <authorList>
            <person name="Chen W."/>
            <person name="Balzi E."/>
            <person name="Capieaux E."/>
            <person name="Goffeau A."/>
        </authorList>
    </citation>
    <scope>NUCLEOTIDE SEQUENCE [GENOMIC DNA]</scope>
    <source>
        <strain>ATCC 46191 / IL125-2B</strain>
    </source>
</reference>
<reference key="2">
    <citation type="journal article" date="1991" name="Yeast">
        <title>The DNA sequencing of the 17 kb HindIII fragment spanning the LEU1 and ATE1 loci on chromosome VII from Saccharomyces cerevisiae reveals the PDR6 gene, a new member of the genetic network controlling pleiotropic drug resistance.</title>
        <authorList>
            <person name="Chen W."/>
            <person name="Balzi E."/>
            <person name="Capieaux E."/>
            <person name="Choder M."/>
            <person name="Goffeau A."/>
        </authorList>
    </citation>
    <scope>NUCLEOTIDE SEQUENCE [GENOMIC DNA]</scope>
    <source>
        <strain>ATCC 46191 / IL125-2B</strain>
    </source>
</reference>
<reference key="3">
    <citation type="journal article" date="1997" name="Nature">
        <title>The nucleotide sequence of Saccharomyces cerevisiae chromosome VII.</title>
        <authorList>
            <person name="Tettelin H."/>
            <person name="Agostoni-Carbone M.L."/>
            <person name="Albermann K."/>
            <person name="Albers M."/>
            <person name="Arroyo J."/>
            <person name="Backes U."/>
            <person name="Barreiros T."/>
            <person name="Bertani I."/>
            <person name="Bjourson A.J."/>
            <person name="Brueckner M."/>
            <person name="Bruschi C.V."/>
            <person name="Carignani G."/>
            <person name="Castagnoli L."/>
            <person name="Cerdan E."/>
            <person name="Clemente M.L."/>
            <person name="Coblenz A."/>
            <person name="Coglievina M."/>
            <person name="Coissac E."/>
            <person name="Defoor E."/>
            <person name="Del Bino S."/>
            <person name="Delius H."/>
            <person name="Delneri D."/>
            <person name="de Wergifosse P."/>
            <person name="Dujon B."/>
            <person name="Durand P."/>
            <person name="Entian K.-D."/>
            <person name="Eraso P."/>
            <person name="Escribano V."/>
            <person name="Fabiani L."/>
            <person name="Fartmann B."/>
            <person name="Feroli F."/>
            <person name="Feuermann M."/>
            <person name="Frontali L."/>
            <person name="Garcia-Gonzalez M."/>
            <person name="Garcia-Saez M.I."/>
            <person name="Goffeau A."/>
            <person name="Guerreiro P."/>
            <person name="Hani J."/>
            <person name="Hansen M."/>
            <person name="Hebling U."/>
            <person name="Hernandez K."/>
            <person name="Heumann K."/>
            <person name="Hilger F."/>
            <person name="Hofmann B."/>
            <person name="Indge K.J."/>
            <person name="James C.M."/>
            <person name="Klima R."/>
            <person name="Koetter P."/>
            <person name="Kramer B."/>
            <person name="Kramer W."/>
            <person name="Lauquin G."/>
            <person name="Leuther H."/>
            <person name="Louis E.J."/>
            <person name="Maillier E."/>
            <person name="Marconi A."/>
            <person name="Martegani E."/>
            <person name="Mazon M.J."/>
            <person name="Mazzoni C."/>
            <person name="McReynolds A.D.K."/>
            <person name="Melchioretto P."/>
            <person name="Mewes H.-W."/>
            <person name="Minenkova O."/>
            <person name="Mueller-Auer S."/>
            <person name="Nawrocki A."/>
            <person name="Netter P."/>
            <person name="Neu R."/>
            <person name="Nombela C."/>
            <person name="Oliver S.G."/>
            <person name="Panzeri L."/>
            <person name="Paoluzi S."/>
            <person name="Plevani P."/>
            <person name="Portetelle D."/>
            <person name="Portillo F."/>
            <person name="Potier S."/>
            <person name="Purnelle B."/>
            <person name="Rieger M."/>
            <person name="Riles L."/>
            <person name="Rinaldi T."/>
            <person name="Robben J."/>
            <person name="Rodrigues-Pousada C."/>
            <person name="Rodriguez-Belmonte E."/>
            <person name="Rodriguez-Torres A.M."/>
            <person name="Rose M."/>
            <person name="Ruzzi M."/>
            <person name="Saliola M."/>
            <person name="Sanchez-Perez M."/>
            <person name="Schaefer B."/>
            <person name="Schaefer M."/>
            <person name="Scharfe M."/>
            <person name="Schmidheini T."/>
            <person name="Schreer A."/>
            <person name="Skala J."/>
            <person name="Souciet J.-L."/>
            <person name="Steensma H.Y."/>
            <person name="Talla E."/>
            <person name="Thierry A."/>
            <person name="Vandenbol M."/>
            <person name="van der Aart Q.J.M."/>
            <person name="Van Dyck L."/>
            <person name="Vanoni M."/>
            <person name="Verhasselt P."/>
            <person name="Voet M."/>
            <person name="Volckaert G."/>
            <person name="Wambutt R."/>
            <person name="Watson M.D."/>
            <person name="Weber N."/>
            <person name="Wedler E."/>
            <person name="Wedler H."/>
            <person name="Wipfli P."/>
            <person name="Wolf K."/>
            <person name="Wright L.F."/>
            <person name="Zaccaria P."/>
            <person name="Zimmermann M."/>
            <person name="Zollner A."/>
            <person name="Kleine K."/>
        </authorList>
    </citation>
    <scope>NUCLEOTIDE SEQUENCE [LARGE SCALE GENOMIC DNA]</scope>
    <source>
        <strain>ATCC 204508 / S288c</strain>
    </source>
</reference>
<reference key="4">
    <citation type="journal article" date="2014" name="G3 (Bethesda)">
        <title>The reference genome sequence of Saccharomyces cerevisiae: Then and now.</title>
        <authorList>
            <person name="Engel S.R."/>
            <person name="Dietrich F.S."/>
            <person name="Fisk D.G."/>
            <person name="Binkley G."/>
            <person name="Balakrishnan R."/>
            <person name="Costanzo M.C."/>
            <person name="Dwight S.S."/>
            <person name="Hitz B.C."/>
            <person name="Karra K."/>
            <person name="Nash R.S."/>
            <person name="Weng S."/>
            <person name="Wong E.D."/>
            <person name="Lloyd P."/>
            <person name="Skrzypek M.S."/>
            <person name="Miyasato S.R."/>
            <person name="Simison M."/>
            <person name="Cherry J.M."/>
        </authorList>
    </citation>
    <scope>GENOME REANNOTATION</scope>
    <source>
        <strain>ATCC 204508 / S288c</strain>
    </source>
</reference>
<reference key="5">
    <citation type="journal article" date="2003" name="Nature">
        <title>Global analysis of protein expression in yeast.</title>
        <authorList>
            <person name="Ghaemmaghami S."/>
            <person name="Huh W.-K."/>
            <person name="Bower K."/>
            <person name="Howson R.W."/>
            <person name="Belle A."/>
            <person name="Dephoure N."/>
            <person name="O'Shea E.K."/>
            <person name="Weissman J.S."/>
        </authorList>
    </citation>
    <scope>LEVEL OF PROTEIN EXPRESSION [LARGE SCALE ANALYSIS]</scope>
</reference>
<reference key="6">
    <citation type="journal article" date="2007" name="J. Proteome Res.">
        <title>Large-scale phosphorylation analysis of alpha-factor-arrested Saccharomyces cerevisiae.</title>
        <authorList>
            <person name="Li X."/>
            <person name="Gerber S.A."/>
            <person name="Rudner A.D."/>
            <person name="Beausoleil S.A."/>
            <person name="Haas W."/>
            <person name="Villen J."/>
            <person name="Elias J.E."/>
            <person name="Gygi S.P."/>
        </authorList>
    </citation>
    <scope>PHOSPHORYLATION [LARGE SCALE ANALYSIS] AT THR-205 AND THR-212</scope>
    <scope>IDENTIFICATION BY MASS SPECTROMETRY [LARGE SCALE ANALYSIS]</scope>
    <source>
        <strain>ADR376</strain>
    </source>
</reference>
<reference key="7">
    <citation type="journal article" date="2008" name="Mol. Cell. Proteomics">
        <title>A multidimensional chromatography technology for in-depth phosphoproteome analysis.</title>
        <authorList>
            <person name="Albuquerque C.P."/>
            <person name="Smolka M.B."/>
            <person name="Payne S.H."/>
            <person name="Bafna V."/>
            <person name="Eng J."/>
            <person name="Zhou H."/>
        </authorList>
    </citation>
    <scope>IDENTIFICATION BY MASS SPECTROMETRY [LARGE SCALE ANALYSIS]</scope>
</reference>
<reference key="8">
    <citation type="journal article" date="2009" name="Science">
        <title>Global analysis of Cdk1 substrate phosphorylation sites provides insights into evolution.</title>
        <authorList>
            <person name="Holt L.J."/>
            <person name="Tuch B.B."/>
            <person name="Villen J."/>
            <person name="Johnson A.D."/>
            <person name="Gygi S.P."/>
            <person name="Morgan D.O."/>
        </authorList>
    </citation>
    <scope>PHOSPHORYLATION [LARGE SCALE ANALYSIS] AT THR-205; THR-252 AND SER-256</scope>
    <scope>IDENTIFICATION BY MASS SPECTROMETRY [LARGE SCALE ANALYSIS]</scope>
</reference>
<evidence type="ECO:0000255" key="1">
    <source>
        <dbReference type="PROSITE-ProRule" id="PRU00318"/>
    </source>
</evidence>
<evidence type="ECO:0000256" key="2">
    <source>
        <dbReference type="SAM" id="MobiDB-lite"/>
    </source>
</evidence>
<evidence type="ECO:0000269" key="3">
    <source>
    </source>
</evidence>
<evidence type="ECO:0000305" key="4"/>
<evidence type="ECO:0007744" key="5">
    <source>
    </source>
</evidence>
<evidence type="ECO:0007744" key="6">
    <source>
    </source>
</evidence>
<evidence type="ECO:0007829" key="7">
    <source>
        <dbReference type="PDB" id="3BWT"/>
    </source>
</evidence>
<evidence type="ECO:0007829" key="8">
    <source>
        <dbReference type="PDB" id="4DZS"/>
    </source>
</evidence>
<protein>
    <recommendedName>
        <fullName>Pumilio homology domain family member 4</fullName>
    </recommendedName>
</protein>
<name>PUF4_YEAST</name>
<organism>
    <name type="scientific">Saccharomyces cerevisiae (strain ATCC 204508 / S288c)</name>
    <name type="common">Baker's yeast</name>
    <dbReference type="NCBI Taxonomy" id="559292"/>
    <lineage>
        <taxon>Eukaryota</taxon>
        <taxon>Fungi</taxon>
        <taxon>Dikarya</taxon>
        <taxon>Ascomycota</taxon>
        <taxon>Saccharomycotina</taxon>
        <taxon>Saccharomycetes</taxon>
        <taxon>Saccharomycetales</taxon>
        <taxon>Saccharomycetaceae</taxon>
        <taxon>Saccharomyces</taxon>
    </lineage>
</organism>
<gene>
    <name type="primary">PUF4</name>
    <name type="ordered locus">YGL014W</name>
    <name type="ORF">YGL023</name>
</gene>
<proteinExistence type="evidence at protein level"/>
<comment type="function">
    <text>Is not essential for haploid growth, but may affect diploid formation.</text>
</comment>
<comment type="miscellaneous">
    <text evidence="3">Present with 721 molecules/cell in log phase SD medium.</text>
</comment>
<feature type="chain" id="PRO_0000075925" description="Pumilio homology domain family member 4">
    <location>
        <begin position="1"/>
        <end position="888"/>
    </location>
</feature>
<feature type="domain" description="PUM-HD" evidence="1">
    <location>
        <begin position="539"/>
        <end position="888"/>
    </location>
</feature>
<feature type="repeat" description="Pumilio 1">
    <location>
        <begin position="563"/>
        <end position="598"/>
    </location>
</feature>
<feature type="repeat" description="Pumilio 2">
    <location>
        <begin position="599"/>
        <end position="634"/>
    </location>
</feature>
<feature type="repeat" description="Pumilio 3">
    <location>
        <begin position="635"/>
        <end position="671"/>
    </location>
</feature>
<feature type="repeat" description="Pumilio 4">
    <location>
        <begin position="672"/>
        <end position="707"/>
    </location>
</feature>
<feature type="repeat" description="Pumilio 5">
    <location>
        <begin position="708"/>
        <end position="743"/>
    </location>
</feature>
<feature type="repeat" description="Pumilio 6">
    <location>
        <begin position="744"/>
        <end position="783"/>
    </location>
</feature>
<feature type="repeat" description="Pumilio 7">
    <location>
        <begin position="784"/>
        <end position="821"/>
    </location>
</feature>
<feature type="repeat" description="Pumilio 8">
    <location>
        <begin position="823"/>
        <end position="861"/>
    </location>
</feature>
<feature type="region of interest" description="Disordered" evidence="2">
    <location>
        <begin position="236"/>
        <end position="270"/>
    </location>
</feature>
<feature type="region of interest" description="Disordered" evidence="2">
    <location>
        <begin position="467"/>
        <end position="551"/>
    </location>
</feature>
<feature type="compositionally biased region" description="Polar residues" evidence="2">
    <location>
        <begin position="243"/>
        <end position="270"/>
    </location>
</feature>
<feature type="compositionally biased region" description="Low complexity" evidence="2">
    <location>
        <begin position="478"/>
        <end position="499"/>
    </location>
</feature>
<feature type="compositionally biased region" description="Low complexity" evidence="2">
    <location>
        <begin position="521"/>
        <end position="543"/>
    </location>
</feature>
<feature type="modified residue" description="Phosphothreonine" evidence="5 6">
    <location>
        <position position="205"/>
    </location>
</feature>
<feature type="modified residue" description="Phosphothreonine" evidence="5">
    <location>
        <position position="212"/>
    </location>
</feature>
<feature type="modified residue" description="Phosphothreonine" evidence="6">
    <location>
        <position position="252"/>
    </location>
</feature>
<feature type="modified residue" description="Phosphoserine" evidence="6">
    <location>
        <position position="256"/>
    </location>
</feature>
<feature type="sequence conflict" description="In Ref. 1 and 2." evidence="4" ref="1 2">
    <original>A</original>
    <variation>R</variation>
    <location>
        <position position="595"/>
    </location>
</feature>
<feature type="turn" evidence="7">
    <location>
        <begin position="555"/>
        <end position="558"/>
    </location>
</feature>
<feature type="helix" evidence="7">
    <location>
        <begin position="561"/>
        <end position="563"/>
    </location>
</feature>
<feature type="turn" evidence="7">
    <location>
        <begin position="564"/>
        <end position="566"/>
    </location>
</feature>
<feature type="helix" evidence="7">
    <location>
        <begin position="568"/>
        <end position="571"/>
    </location>
</feature>
<feature type="strand" evidence="8">
    <location>
        <begin position="572"/>
        <end position="574"/>
    </location>
</feature>
<feature type="helix" evidence="7">
    <location>
        <begin position="575"/>
        <end position="587"/>
    </location>
</feature>
<feature type="helix" evidence="7">
    <location>
        <begin position="590"/>
        <end position="600"/>
    </location>
</feature>
<feature type="helix" evidence="7">
    <location>
        <begin position="601"/>
        <end position="603"/>
    </location>
</feature>
<feature type="helix" evidence="7">
    <location>
        <begin position="604"/>
        <end position="608"/>
    </location>
</feature>
<feature type="helix" evidence="7">
    <location>
        <begin position="613"/>
        <end position="623"/>
    </location>
</feature>
<feature type="helix" evidence="7">
    <location>
        <begin position="626"/>
        <end position="636"/>
    </location>
</feature>
<feature type="helix" evidence="7">
    <location>
        <begin position="637"/>
        <end position="639"/>
    </location>
</feature>
<feature type="helix" evidence="7">
    <location>
        <begin position="640"/>
        <end position="645"/>
    </location>
</feature>
<feature type="helix" evidence="7">
    <location>
        <begin position="649"/>
        <end position="659"/>
    </location>
</feature>
<feature type="helix" evidence="7">
    <location>
        <begin position="663"/>
        <end position="673"/>
    </location>
</feature>
<feature type="helix" evidence="7">
    <location>
        <begin position="674"/>
        <end position="676"/>
    </location>
</feature>
<feature type="helix" evidence="7">
    <location>
        <begin position="677"/>
        <end position="681"/>
    </location>
</feature>
<feature type="helix" evidence="7">
    <location>
        <begin position="686"/>
        <end position="696"/>
    </location>
</feature>
<feature type="helix" evidence="7">
    <location>
        <begin position="699"/>
        <end position="711"/>
    </location>
</feature>
<feature type="helix" evidence="7">
    <location>
        <begin position="713"/>
        <end position="717"/>
    </location>
</feature>
<feature type="helix" evidence="7">
    <location>
        <begin position="722"/>
        <end position="732"/>
    </location>
</feature>
<feature type="helix" evidence="7">
    <location>
        <begin position="735"/>
        <end position="746"/>
    </location>
</feature>
<feature type="helix" evidence="7">
    <location>
        <begin position="749"/>
        <end position="753"/>
    </location>
</feature>
<feature type="helix" evidence="7">
    <location>
        <begin position="758"/>
        <end position="772"/>
    </location>
</feature>
<feature type="helix" evidence="7">
    <location>
        <begin position="777"/>
        <end position="785"/>
    </location>
</feature>
<feature type="helix" evidence="7">
    <location>
        <begin position="786"/>
        <end position="788"/>
    </location>
</feature>
<feature type="helix" evidence="7">
    <location>
        <begin position="789"/>
        <end position="793"/>
    </location>
</feature>
<feature type="helix" evidence="7">
    <location>
        <begin position="798"/>
        <end position="806"/>
    </location>
</feature>
<feature type="helix" evidence="7">
    <location>
        <begin position="809"/>
        <end position="821"/>
    </location>
</feature>
<feature type="helix" evidence="7">
    <location>
        <begin position="824"/>
        <end position="832"/>
    </location>
</feature>
<feature type="helix" evidence="7">
    <location>
        <begin position="837"/>
        <end position="851"/>
    </location>
</feature>
<feature type="helix" evidence="7">
    <location>
        <begin position="853"/>
        <end position="863"/>
    </location>
</feature>
<feature type="helix" evidence="7">
    <location>
        <begin position="864"/>
        <end position="866"/>
    </location>
</feature>
<feature type="helix" evidence="7">
    <location>
        <begin position="869"/>
        <end position="873"/>
    </location>
</feature>
<feature type="helix" evidence="7">
    <location>
        <begin position="875"/>
        <end position="881"/>
    </location>
</feature>
<feature type="strand" evidence="8">
    <location>
        <begin position="883"/>
        <end position="885"/>
    </location>
</feature>
<dbReference type="EMBL" id="S57889">
    <property type="protein sequence ID" value="AAB19616.1"/>
    <property type="molecule type" value="Genomic_DNA"/>
</dbReference>
<dbReference type="EMBL" id="S58126">
    <property type="protein sequence ID" value="AAD13898.1"/>
    <property type="molecule type" value="Genomic_DNA"/>
</dbReference>
<dbReference type="EMBL" id="Z72536">
    <property type="protein sequence ID" value="CAA96714.1"/>
    <property type="molecule type" value="Genomic_DNA"/>
</dbReference>
<dbReference type="EMBL" id="BK006941">
    <property type="protein sequence ID" value="DAA08084.1"/>
    <property type="molecule type" value="Genomic_DNA"/>
</dbReference>
<dbReference type="PIR" id="S64016">
    <property type="entry name" value="S64016"/>
</dbReference>
<dbReference type="RefSeq" id="NP_011501.1">
    <property type="nucleotide sequence ID" value="NM_001180879.1"/>
</dbReference>
<dbReference type="PDB" id="3BWT">
    <property type="method" value="X-ray"/>
    <property type="resolution" value="2.69 A"/>
    <property type="chains" value="A=554-886"/>
</dbReference>
<dbReference type="PDB" id="3BX2">
    <property type="method" value="X-ray"/>
    <property type="resolution" value="2.84 A"/>
    <property type="chains" value="A/B=554-888"/>
</dbReference>
<dbReference type="PDB" id="3BX3">
    <property type="method" value="X-ray"/>
    <property type="resolution" value="3.00 A"/>
    <property type="chains" value="A/B=554-888"/>
</dbReference>
<dbReference type="PDB" id="4DZS">
    <property type="method" value="X-ray"/>
    <property type="resolution" value="3.14 A"/>
    <property type="chains" value="A/B=536-888"/>
</dbReference>
<dbReference type="PDBsum" id="3BWT"/>
<dbReference type="PDBsum" id="3BX2"/>
<dbReference type="PDBsum" id="3BX3"/>
<dbReference type="PDBsum" id="4DZS"/>
<dbReference type="SMR" id="P25339"/>
<dbReference type="BioGRID" id="33232">
    <property type="interactions" value="696"/>
</dbReference>
<dbReference type="DIP" id="DIP-2638N"/>
<dbReference type="FunCoup" id="P25339">
    <property type="interactions" value="43"/>
</dbReference>
<dbReference type="IntAct" id="P25339">
    <property type="interactions" value="19"/>
</dbReference>
<dbReference type="MINT" id="P25339"/>
<dbReference type="STRING" id="4932.YGL014W"/>
<dbReference type="GlyGen" id="P25339">
    <property type="glycosylation" value="2 sites, 1 O-linked glycan (2 sites)"/>
</dbReference>
<dbReference type="iPTMnet" id="P25339"/>
<dbReference type="PaxDb" id="4932-YGL014W"/>
<dbReference type="PeptideAtlas" id="P25339"/>
<dbReference type="EnsemblFungi" id="YGL014W_mRNA">
    <property type="protein sequence ID" value="YGL014W"/>
    <property type="gene ID" value="YGL014W"/>
</dbReference>
<dbReference type="GeneID" id="852870"/>
<dbReference type="KEGG" id="sce:YGL014W"/>
<dbReference type="AGR" id="SGD:S000002982"/>
<dbReference type="SGD" id="S000002982">
    <property type="gene designation" value="PUF4"/>
</dbReference>
<dbReference type="VEuPathDB" id="FungiDB:YGL014W"/>
<dbReference type="eggNOG" id="KOG2049">
    <property type="taxonomic scope" value="Eukaryota"/>
</dbReference>
<dbReference type="HOGENOM" id="CLU_016143_0_0_1"/>
<dbReference type="InParanoid" id="P25339"/>
<dbReference type="OMA" id="FRRQTFH"/>
<dbReference type="OrthoDB" id="668540at2759"/>
<dbReference type="BioCyc" id="YEAST:G3O-30535-MONOMER"/>
<dbReference type="BioGRID-ORCS" id="852870">
    <property type="hits" value="1 hit in 10 CRISPR screens"/>
</dbReference>
<dbReference type="EvolutionaryTrace" id="P25339"/>
<dbReference type="PRO" id="PR:P25339"/>
<dbReference type="Proteomes" id="UP000002311">
    <property type="component" value="Chromosome VII"/>
</dbReference>
<dbReference type="RNAct" id="P25339">
    <property type="molecule type" value="protein"/>
</dbReference>
<dbReference type="GO" id="GO:0005737">
    <property type="term" value="C:cytoplasm"/>
    <property type="evidence" value="ECO:0007005"/>
    <property type="project" value="SGD"/>
</dbReference>
<dbReference type="GO" id="GO:0003729">
    <property type="term" value="F:mRNA binding"/>
    <property type="evidence" value="ECO:0000314"/>
    <property type="project" value="SGD"/>
</dbReference>
<dbReference type="GO" id="GO:0017148">
    <property type="term" value="P:negative regulation of translation"/>
    <property type="evidence" value="ECO:0000314"/>
    <property type="project" value="SGD"/>
</dbReference>
<dbReference type="GO" id="GO:0000288">
    <property type="term" value="P:nuclear-transcribed mRNA catabolic process, deadenylation-dependent decay"/>
    <property type="evidence" value="ECO:0000314"/>
    <property type="project" value="SGD"/>
</dbReference>
<dbReference type="GO" id="GO:0010608">
    <property type="term" value="P:post-transcriptional regulation of gene expression"/>
    <property type="evidence" value="ECO:0000318"/>
    <property type="project" value="GO_Central"/>
</dbReference>
<dbReference type="GO" id="GO:0008104">
    <property type="term" value="P:protein localization"/>
    <property type="evidence" value="ECO:0000315"/>
    <property type="project" value="SGD"/>
</dbReference>
<dbReference type="CDD" id="cd07920">
    <property type="entry name" value="Pumilio"/>
    <property type="match status" value="1"/>
</dbReference>
<dbReference type="FunFam" id="1.25.10.10:FF:000237">
    <property type="entry name" value="Pumilio homolog 9"/>
    <property type="match status" value="1"/>
</dbReference>
<dbReference type="Gene3D" id="1.25.10.10">
    <property type="entry name" value="Leucine-rich Repeat Variant"/>
    <property type="match status" value="1"/>
</dbReference>
<dbReference type="InterPro" id="IPR011989">
    <property type="entry name" value="ARM-like"/>
</dbReference>
<dbReference type="InterPro" id="IPR016024">
    <property type="entry name" value="ARM-type_fold"/>
</dbReference>
<dbReference type="InterPro" id="IPR033133">
    <property type="entry name" value="PUM-HD"/>
</dbReference>
<dbReference type="InterPro" id="IPR033712">
    <property type="entry name" value="Pumilio_RNA-bd"/>
</dbReference>
<dbReference type="InterPro" id="IPR001313">
    <property type="entry name" value="Pumilio_RNA-bd_rpt"/>
</dbReference>
<dbReference type="PANTHER" id="PTHR12537:SF13">
    <property type="entry name" value="PUMILIO HOMOLOGY DOMAIN FAMILY MEMBER 4"/>
    <property type="match status" value="1"/>
</dbReference>
<dbReference type="PANTHER" id="PTHR12537">
    <property type="entry name" value="RNA BINDING PROTEIN PUMILIO-RELATED"/>
    <property type="match status" value="1"/>
</dbReference>
<dbReference type="Pfam" id="PF00806">
    <property type="entry name" value="PUF"/>
    <property type="match status" value="8"/>
</dbReference>
<dbReference type="SMART" id="SM00025">
    <property type="entry name" value="Pumilio"/>
    <property type="match status" value="8"/>
</dbReference>
<dbReference type="SUPFAM" id="SSF48371">
    <property type="entry name" value="ARM repeat"/>
    <property type="match status" value="1"/>
</dbReference>
<dbReference type="PROSITE" id="PS50302">
    <property type="entry name" value="PUM"/>
    <property type="match status" value="8"/>
</dbReference>
<dbReference type="PROSITE" id="PS50303">
    <property type="entry name" value="PUM_HD"/>
    <property type="match status" value="1"/>
</dbReference>
<sequence length="888" mass="97798">MSTKGLKEEIDDVPSVDPVVSETVNSALEQLQLDDPEENATSNAFANKVSQDSQFANGPPSQMFPHPQMMGGMGFMPYSQMMQVPHNPCPFFPPPDFNDPTAPLSSSPLNAGGPPMLFKNDSLPFQMLSSGAAVATQGGQNLNPLINDNSMKVLPIASADPLWTHSNVPGSASVAIEETTATLQESLPSKGRESNNKASSFRRQTFHALSPTDLINAANNVTLSKDFQSDMQNFSKAKKPSVGANNTAKTRTQSISFDNTPSSTSFIPPTNSVSEKLSDFKIETSKEDLINKTAPAKKESPTTYGAAYPYGGPLLQPNPIMPGHPHNISSPIYGIRSPFPNSYEMGAQFQPFSPILNPTSHSLNANSPIPLTQSPIHLAPVLNPSSNSVAFSDMKNDGGKPTTDNDKAGPNVRMDLINPNLGPSMQPFHILPPQQNTPPPPWLYSTPPPFNAMVPPHLLAQNHMPLMNSANNKHHGRNNNSMSSHNDNDNIGNSNYNNKDTGRSNVGKMKNMKNSYHGYYNNNNNNNNNNNNNNNSNATNSNSAEKQRKIEESSRFADAVLDQYIGSIHSLCKDQHGCRFLQKQLDILGSKAADAIFEETKDYTVELMTDSFGNYLIQKLLEEVTTEQRIVLTKISSPHFVEISLNPHGTRALQKLIECIKTDEEAQIVVDSLRPYTVQLSKDLNGNHVIQKCLQRLKPENFQFIFDAISDSCIDIATHRHGCCVLQRCLDHGTTEQCDNLCDKLLALVDKLTLDPFGNYVVQYIITKEAEKNKYDYTHKIVHLLKPRAIELSIHKFGSNVIEKILKTAIVSEPMILEILNNGGETGIQSLLNDSYGNYVLQTALDISHKQNDYLYKRLSEIVAPLLVGPIRNTPHGKRIIGMLHLDS</sequence>
<accession>P25339</accession>
<accession>D6VUC3</accession>